<proteinExistence type="inferred from homology"/>
<sequence length="128" mass="14318">MEVLNAIGRRKTSVARVYLQSGKGSIVVNGLDFKTYFKTEPLQISVESPLNLVAEAGKYDINVNVQGGGVTGQAEAIRLGIARALVLVNSEFKSPLRKEGLMTRDSRMVERKKYGKRKARKRFQFSKR</sequence>
<protein>
    <recommendedName>
        <fullName evidence="1">Small ribosomal subunit protein uS9</fullName>
    </recommendedName>
    <alternativeName>
        <fullName evidence="2">30S ribosomal protein S9</fullName>
    </alternativeName>
</protein>
<accession>Q11QN5</accession>
<reference key="1">
    <citation type="journal article" date="2007" name="Appl. Environ. Microbiol.">
        <title>Genome sequence of the cellulolytic gliding bacterium Cytophaga hutchinsonii.</title>
        <authorList>
            <person name="Xie G."/>
            <person name="Bruce D.C."/>
            <person name="Challacombe J.F."/>
            <person name="Chertkov O."/>
            <person name="Detter J.C."/>
            <person name="Gilna P."/>
            <person name="Han C.S."/>
            <person name="Lucas S."/>
            <person name="Misra M."/>
            <person name="Myers G.L."/>
            <person name="Richardson P."/>
            <person name="Tapia R."/>
            <person name="Thayer N."/>
            <person name="Thompson L.S."/>
            <person name="Brettin T.S."/>
            <person name="Henrissat B."/>
            <person name="Wilson D.B."/>
            <person name="McBride M.J."/>
        </authorList>
    </citation>
    <scope>NUCLEOTIDE SEQUENCE [LARGE SCALE GENOMIC DNA]</scope>
    <source>
        <strain>ATCC 33406 / DSM 1761 / JCM 20678 / CIP 103989 / IAM 12607 / NBRC 15051 / NCIMB 9469 / D465</strain>
    </source>
</reference>
<name>RS9_CYTH3</name>
<feature type="chain" id="PRO_1000051214" description="Small ribosomal subunit protein uS9">
    <location>
        <begin position="1"/>
        <end position="128"/>
    </location>
</feature>
<organism>
    <name type="scientific">Cytophaga hutchinsonii (strain ATCC 33406 / DSM 1761 / CIP 103989 / NBRC 15051 / NCIMB 9469 / D465)</name>
    <dbReference type="NCBI Taxonomy" id="269798"/>
    <lineage>
        <taxon>Bacteria</taxon>
        <taxon>Pseudomonadati</taxon>
        <taxon>Bacteroidota</taxon>
        <taxon>Cytophagia</taxon>
        <taxon>Cytophagales</taxon>
        <taxon>Cytophagaceae</taxon>
        <taxon>Cytophaga</taxon>
    </lineage>
</organism>
<dbReference type="EMBL" id="CP000383">
    <property type="protein sequence ID" value="ABG60279.1"/>
    <property type="molecule type" value="Genomic_DNA"/>
</dbReference>
<dbReference type="RefSeq" id="WP_011586389.1">
    <property type="nucleotide sequence ID" value="NC_008255.1"/>
</dbReference>
<dbReference type="SMR" id="Q11QN5"/>
<dbReference type="STRING" id="269798.CHU_3038"/>
<dbReference type="KEGG" id="chu:CHU_3038"/>
<dbReference type="eggNOG" id="COG0103">
    <property type="taxonomic scope" value="Bacteria"/>
</dbReference>
<dbReference type="HOGENOM" id="CLU_046483_2_1_10"/>
<dbReference type="OrthoDB" id="9803965at2"/>
<dbReference type="Proteomes" id="UP000001822">
    <property type="component" value="Chromosome"/>
</dbReference>
<dbReference type="GO" id="GO:0022627">
    <property type="term" value="C:cytosolic small ribosomal subunit"/>
    <property type="evidence" value="ECO:0007669"/>
    <property type="project" value="TreeGrafter"/>
</dbReference>
<dbReference type="GO" id="GO:0003723">
    <property type="term" value="F:RNA binding"/>
    <property type="evidence" value="ECO:0007669"/>
    <property type="project" value="TreeGrafter"/>
</dbReference>
<dbReference type="GO" id="GO:0003735">
    <property type="term" value="F:structural constituent of ribosome"/>
    <property type="evidence" value="ECO:0007669"/>
    <property type="project" value="InterPro"/>
</dbReference>
<dbReference type="GO" id="GO:0006412">
    <property type="term" value="P:translation"/>
    <property type="evidence" value="ECO:0007669"/>
    <property type="project" value="UniProtKB-UniRule"/>
</dbReference>
<dbReference type="FunFam" id="3.30.230.10:FF:000001">
    <property type="entry name" value="30S ribosomal protein S9"/>
    <property type="match status" value="1"/>
</dbReference>
<dbReference type="Gene3D" id="3.30.230.10">
    <property type="match status" value="1"/>
</dbReference>
<dbReference type="HAMAP" id="MF_00532_B">
    <property type="entry name" value="Ribosomal_uS9_B"/>
    <property type="match status" value="1"/>
</dbReference>
<dbReference type="InterPro" id="IPR020568">
    <property type="entry name" value="Ribosomal_Su5_D2-typ_SF"/>
</dbReference>
<dbReference type="InterPro" id="IPR000754">
    <property type="entry name" value="Ribosomal_uS9"/>
</dbReference>
<dbReference type="InterPro" id="IPR023035">
    <property type="entry name" value="Ribosomal_uS9_bac/plastid"/>
</dbReference>
<dbReference type="InterPro" id="IPR020574">
    <property type="entry name" value="Ribosomal_uS9_CS"/>
</dbReference>
<dbReference type="InterPro" id="IPR014721">
    <property type="entry name" value="Ribsml_uS5_D2-typ_fold_subgr"/>
</dbReference>
<dbReference type="NCBIfam" id="NF001099">
    <property type="entry name" value="PRK00132.1"/>
    <property type="match status" value="1"/>
</dbReference>
<dbReference type="PANTHER" id="PTHR21569">
    <property type="entry name" value="RIBOSOMAL PROTEIN S9"/>
    <property type="match status" value="1"/>
</dbReference>
<dbReference type="PANTHER" id="PTHR21569:SF1">
    <property type="entry name" value="SMALL RIBOSOMAL SUBUNIT PROTEIN US9M"/>
    <property type="match status" value="1"/>
</dbReference>
<dbReference type="Pfam" id="PF00380">
    <property type="entry name" value="Ribosomal_S9"/>
    <property type="match status" value="1"/>
</dbReference>
<dbReference type="SUPFAM" id="SSF54211">
    <property type="entry name" value="Ribosomal protein S5 domain 2-like"/>
    <property type="match status" value="1"/>
</dbReference>
<dbReference type="PROSITE" id="PS00360">
    <property type="entry name" value="RIBOSOMAL_S9"/>
    <property type="match status" value="1"/>
</dbReference>
<comment type="similarity">
    <text evidence="1">Belongs to the universal ribosomal protein uS9 family.</text>
</comment>
<evidence type="ECO:0000255" key="1">
    <source>
        <dbReference type="HAMAP-Rule" id="MF_00532"/>
    </source>
</evidence>
<evidence type="ECO:0000305" key="2"/>
<keyword id="KW-1185">Reference proteome</keyword>
<keyword id="KW-0687">Ribonucleoprotein</keyword>
<keyword id="KW-0689">Ribosomal protein</keyword>
<gene>
    <name evidence="1" type="primary">rpsI</name>
    <name type="ordered locus">CHU_3038</name>
</gene>